<evidence type="ECO:0000250" key="1"/>
<evidence type="ECO:0000269" key="2">
    <source>
    </source>
</evidence>
<evidence type="ECO:0000305" key="3"/>
<keyword id="KW-0963">Cytoplasm</keyword>
<keyword id="KW-0456">Lyase</keyword>
<keyword id="KW-0460">Magnesium</keyword>
<keyword id="KW-0479">Metal-binding</keyword>
<keyword id="KW-0611">Plant defense</keyword>
<sequence length="548" mass="63167">MASAAVGNYEEEIVRPVADFSPSLWGDHFLSFSIDNQVAEKYAQEIEPLKEQTRSMLLATGRKLADTLNLIDTIERLGISYYFEKEIDEILDHIYNQNSNCNDFCTSALQFRLLRQHGFNISPQIFSKFQDENGKFRESLASDVLGLLNLYEASHVRTHADDILEDALAFSTIHLESAAPHLKSPLREQVTHALEQCLHKGVPRVETRFFISSIYEKEQSKNNVLLRFAKLDFNLLQMLHKQELAEVSRWWKDLDFVTTLPYARDRVVECYFWALGVYFEPQYSQARVMLVKTISMISIVDDTFDAYGTVKELEAYTDAIQRWDINEIDRLPHYMKISYKAILDLYKDYEKELSSAEKSHIVCHAIERMKEVVGHYNVESTWFIEGYMPPVSEYLSNALATTTYYYLATTSYLGMKSATEQDFEWLSKNPKILEASVIICRVIDDTATYEVEKSRGQIATGIECCMRDYGISTKKAMAKFQKMAETAWKDINEGLLRPTPVSTEFLTLILNLARIVEVTYIHNLDGYTHPEKVLKPHIINLLVDSIKI</sequence>
<proteinExistence type="evidence at protein level"/>
<reference key="1">
    <citation type="journal article" date="2002" name="Phytochemistry">
        <title>Gene expression of 5-epi-aristolochene synthase and formation of capsidiol in roots of Nicotiana attenuata and N. sylvestris.</title>
        <authorList>
            <person name="Bohlmann J."/>
            <person name="Stauber E.J."/>
            <person name="Krock B."/>
            <person name="Oldham N.J."/>
            <person name="Gershenzon J."/>
            <person name="Baldwin I.T."/>
        </authorList>
    </citation>
    <scope>NUCLEOTIDE SEQUENCE [MRNA]</scope>
    <scope>FUNCTION</scope>
    <scope>CATALYTIC ACTIVITY</scope>
    <scope>TISSUE SPECIFICITY</scope>
</reference>
<comment type="function">
    <text evidence="2">Catalyzes the cyclization of trans,trans-farnesyl diphosphate (FPP) to the bicyclic intermediate 5-epi-aristolochene, initial step in the conversion of FPP to the sesquiterpenoid antifungal phytoalexin capsidiol. Produces germacrene A as an enzyme-bound intermediate that is not released by the enzyme, but is further cyclized to produce the bicyclic 5-epi-aristolochene.</text>
</comment>
<comment type="catalytic activity">
    <reaction evidence="2">
        <text>(2E,6E)-farnesyl diphosphate = (+)-5-epi-aristolochene + diphosphate</text>
        <dbReference type="Rhea" id="RHEA:28635"/>
        <dbReference type="ChEBI" id="CHEBI:23925"/>
        <dbReference type="ChEBI" id="CHEBI:33019"/>
        <dbReference type="ChEBI" id="CHEBI:175763"/>
        <dbReference type="EC" id="4.2.3.61"/>
    </reaction>
</comment>
<comment type="cofactor">
    <cofactor evidence="1">
        <name>Mg(2+)</name>
        <dbReference type="ChEBI" id="CHEBI:18420"/>
    </cofactor>
    <text evidence="1">Binds 3 Mg(2+) ions per subunit.</text>
</comment>
<comment type="pathway">
    <text>Secondary metabolite biosynthesis; terpenoid biosynthesis.</text>
</comment>
<comment type="subunit">
    <text evidence="1">Monomer.</text>
</comment>
<comment type="subcellular location">
    <subcellularLocation>
        <location evidence="3">Cytoplasm</location>
    </subcellularLocation>
</comment>
<comment type="tissue specificity">
    <text evidence="2">Expressed in roots, but not in shoots.</text>
</comment>
<comment type="domain">
    <text evidence="1">The Asp-Asp-Xaa-Xaa-Asp/Glu (DDXXD/E) motif is important for the catalytic activity, presumably through binding to Mg(2+).</text>
</comment>
<comment type="similarity">
    <text evidence="3">Belongs to the terpene synthase family.</text>
</comment>
<feature type="chain" id="PRO_0000412244" description="5-epi-aristolochene synthase 1">
    <location>
        <begin position="1"/>
        <end position="548"/>
    </location>
</feature>
<feature type="short sequence motif" description="DDXXD motif">
    <location>
        <begin position="301"/>
        <end position="305"/>
    </location>
</feature>
<feature type="binding site" evidence="1">
    <location>
        <position position="301"/>
    </location>
    <ligand>
        <name>Mg(2+)</name>
        <dbReference type="ChEBI" id="CHEBI:18420"/>
        <label>1</label>
    </ligand>
</feature>
<feature type="binding site" evidence="1">
    <location>
        <position position="301"/>
    </location>
    <ligand>
        <name>Mg(2+)</name>
        <dbReference type="ChEBI" id="CHEBI:18420"/>
        <label>2</label>
    </ligand>
</feature>
<feature type="binding site" evidence="1">
    <location>
        <position position="305"/>
    </location>
    <ligand>
        <name>Mg(2+)</name>
        <dbReference type="ChEBI" id="CHEBI:18420"/>
        <label>1</label>
    </ligand>
</feature>
<feature type="binding site" evidence="1">
    <location>
        <position position="305"/>
    </location>
    <ligand>
        <name>Mg(2+)</name>
        <dbReference type="ChEBI" id="CHEBI:18420"/>
        <label>2</label>
    </ligand>
</feature>
<feature type="binding site" evidence="1">
    <location>
        <position position="444"/>
    </location>
    <ligand>
        <name>Mg(2+)</name>
        <dbReference type="ChEBI" id="CHEBI:18420"/>
        <label>3</label>
    </ligand>
</feature>
<feature type="binding site" evidence="1">
    <location>
        <position position="448"/>
    </location>
    <ligand>
        <name>Mg(2+)</name>
        <dbReference type="ChEBI" id="CHEBI:18420"/>
        <label>3</label>
    </ligand>
</feature>
<feature type="binding site" evidence="1">
    <location>
        <position position="452"/>
    </location>
    <ligand>
        <name>Mg(2+)</name>
        <dbReference type="ChEBI" id="CHEBI:18420"/>
        <label>3</label>
    </ligand>
</feature>
<dbReference type="EC" id="4.2.3.61"/>
<dbReference type="EMBL" id="AF484124">
    <property type="protein sequence ID" value="AAP05761.1"/>
    <property type="molecule type" value="mRNA"/>
</dbReference>
<dbReference type="SMR" id="Q84LF1"/>
<dbReference type="KEGG" id="ag:AAP05761"/>
<dbReference type="BioCyc" id="MetaCyc:EAS34-MONOMER"/>
<dbReference type="BRENDA" id="4.2.3.61">
    <property type="organism ID" value="9729"/>
</dbReference>
<dbReference type="UniPathway" id="UPA00213"/>
<dbReference type="GO" id="GO:0005737">
    <property type="term" value="C:cytoplasm"/>
    <property type="evidence" value="ECO:0007669"/>
    <property type="project" value="UniProtKB-SubCell"/>
</dbReference>
<dbReference type="GO" id="GO:0102698">
    <property type="term" value="F:5-epi-aristolochene synthase activity"/>
    <property type="evidence" value="ECO:0007669"/>
    <property type="project" value="UniProtKB-EC"/>
</dbReference>
<dbReference type="GO" id="GO:0000287">
    <property type="term" value="F:magnesium ion binding"/>
    <property type="evidence" value="ECO:0007669"/>
    <property type="project" value="InterPro"/>
</dbReference>
<dbReference type="GO" id="GO:0010333">
    <property type="term" value="F:terpene synthase activity"/>
    <property type="evidence" value="ECO:0007669"/>
    <property type="project" value="InterPro"/>
</dbReference>
<dbReference type="GO" id="GO:0006952">
    <property type="term" value="P:defense response"/>
    <property type="evidence" value="ECO:0007669"/>
    <property type="project" value="UniProtKB-KW"/>
</dbReference>
<dbReference type="GO" id="GO:0016102">
    <property type="term" value="P:diterpenoid biosynthetic process"/>
    <property type="evidence" value="ECO:0007669"/>
    <property type="project" value="InterPro"/>
</dbReference>
<dbReference type="CDD" id="cd00684">
    <property type="entry name" value="Terpene_cyclase_plant_C1"/>
    <property type="match status" value="1"/>
</dbReference>
<dbReference type="FunFam" id="1.10.600.10:FF:000007">
    <property type="entry name" value="Isoprene synthase, chloroplastic"/>
    <property type="match status" value="1"/>
</dbReference>
<dbReference type="FunFam" id="1.50.10.130:FF:000001">
    <property type="entry name" value="Isoprene synthase, chloroplastic"/>
    <property type="match status" value="1"/>
</dbReference>
<dbReference type="Gene3D" id="1.10.600.10">
    <property type="entry name" value="Farnesyl Diphosphate Synthase"/>
    <property type="match status" value="1"/>
</dbReference>
<dbReference type="Gene3D" id="1.50.10.130">
    <property type="entry name" value="Terpene synthase, N-terminal domain"/>
    <property type="match status" value="1"/>
</dbReference>
<dbReference type="InterPro" id="IPR008949">
    <property type="entry name" value="Isoprenoid_synthase_dom_sf"/>
</dbReference>
<dbReference type="InterPro" id="IPR044814">
    <property type="entry name" value="Terpene_cyclase_plant_C1"/>
</dbReference>
<dbReference type="InterPro" id="IPR001906">
    <property type="entry name" value="Terpene_synth_N"/>
</dbReference>
<dbReference type="InterPro" id="IPR036965">
    <property type="entry name" value="Terpene_synth_N_sf"/>
</dbReference>
<dbReference type="InterPro" id="IPR050148">
    <property type="entry name" value="Terpene_synthase-like"/>
</dbReference>
<dbReference type="InterPro" id="IPR005630">
    <property type="entry name" value="Terpene_synthase_metal-bd"/>
</dbReference>
<dbReference type="InterPro" id="IPR008930">
    <property type="entry name" value="Terpenoid_cyclase/PrenylTrfase"/>
</dbReference>
<dbReference type="PANTHER" id="PTHR31225:SF93">
    <property type="entry name" value="ALPHA-HUMULENE_(-)-(E)-BETA-CARYOPHYLLENE SYNTHASE"/>
    <property type="match status" value="1"/>
</dbReference>
<dbReference type="PANTHER" id="PTHR31225">
    <property type="entry name" value="OS04G0344100 PROTEIN-RELATED"/>
    <property type="match status" value="1"/>
</dbReference>
<dbReference type="Pfam" id="PF01397">
    <property type="entry name" value="Terpene_synth"/>
    <property type="match status" value="1"/>
</dbReference>
<dbReference type="Pfam" id="PF03936">
    <property type="entry name" value="Terpene_synth_C"/>
    <property type="match status" value="1"/>
</dbReference>
<dbReference type="SFLD" id="SFLDS00005">
    <property type="entry name" value="Isoprenoid_Synthase_Type_I"/>
    <property type="match status" value="1"/>
</dbReference>
<dbReference type="SFLD" id="SFLDG01604">
    <property type="entry name" value="Terpene_Cyclase_Like_1_C_Termi"/>
    <property type="match status" value="1"/>
</dbReference>
<dbReference type="SFLD" id="SFLDG01014">
    <property type="entry name" value="Terpene_Cyclase_Like_1_N-term"/>
    <property type="match status" value="1"/>
</dbReference>
<dbReference type="SUPFAM" id="SSF48239">
    <property type="entry name" value="Terpenoid cyclases/Protein prenyltransferases"/>
    <property type="match status" value="1"/>
</dbReference>
<dbReference type="SUPFAM" id="SSF48576">
    <property type="entry name" value="Terpenoid synthases"/>
    <property type="match status" value="1"/>
</dbReference>
<organism>
    <name type="scientific">Nicotiana attenuata</name>
    <name type="common">Coyote tobacco</name>
    <dbReference type="NCBI Taxonomy" id="49451"/>
    <lineage>
        <taxon>Eukaryota</taxon>
        <taxon>Viridiplantae</taxon>
        <taxon>Streptophyta</taxon>
        <taxon>Embryophyta</taxon>
        <taxon>Tracheophyta</taxon>
        <taxon>Spermatophyta</taxon>
        <taxon>Magnoliopsida</taxon>
        <taxon>eudicotyledons</taxon>
        <taxon>Gunneridae</taxon>
        <taxon>Pentapetalae</taxon>
        <taxon>asterids</taxon>
        <taxon>lamiids</taxon>
        <taxon>Solanales</taxon>
        <taxon>Solanaceae</taxon>
        <taxon>Nicotianoideae</taxon>
        <taxon>Nicotianeae</taxon>
        <taxon>Nicotiana</taxon>
    </lineage>
</organism>
<name>5EAS1_NICAT</name>
<protein>
    <recommendedName>
        <fullName>5-epi-aristolochene synthase 1</fullName>
        <shortName>NaEAS34</shortName>
        <ecNumber>4.2.3.61</ecNumber>
    </recommendedName>
</protein>
<gene>
    <name type="primary">EAS</name>
</gene>
<accession>Q84LF1</accession>